<organism>
    <name type="scientific">Danio rerio</name>
    <name type="common">Zebrafish</name>
    <name type="synonym">Brachydanio rerio</name>
    <dbReference type="NCBI Taxonomy" id="7955"/>
    <lineage>
        <taxon>Eukaryota</taxon>
        <taxon>Metazoa</taxon>
        <taxon>Chordata</taxon>
        <taxon>Craniata</taxon>
        <taxon>Vertebrata</taxon>
        <taxon>Euteleostomi</taxon>
        <taxon>Actinopterygii</taxon>
        <taxon>Neopterygii</taxon>
        <taxon>Teleostei</taxon>
        <taxon>Ostariophysi</taxon>
        <taxon>Cypriniformes</taxon>
        <taxon>Danionidae</taxon>
        <taxon>Danioninae</taxon>
        <taxon>Danio</taxon>
    </lineage>
</organism>
<name>CNO10_DANRE</name>
<comment type="function">
    <text evidence="1">Component of the CCR4-NOT complex which is one of the major cellular mRNA deadenylases and is linked to various cellular processes including bulk mRNA degradation, miRNA-mediated repression, translational repression during translational initiation and general transcription regulation. Additional complex functions may be a consequence of its influence on mRNA expression. Is not required for association of CNOT7 to the CCR4-NOT complex (By similarity).</text>
</comment>
<comment type="subunit">
    <text evidence="1">Component of the CCR4-NOT complex. cnot10 and cnot11 form a subcomplex docked to the cnot1 scaffold (By similarity).</text>
</comment>
<comment type="subcellular location">
    <subcellularLocation>
        <location evidence="1">Cytoplasm</location>
    </subcellularLocation>
    <subcellularLocation>
        <location evidence="1">Nucleus</location>
    </subcellularLocation>
</comment>
<comment type="similarity">
    <text evidence="3">Belongs to the CNOT10 family.</text>
</comment>
<sequence length="624" mass="68257">MKHDIASSPGMSDLEKEVATNAFEAFKTGSYDESLKYLDNLQELNKEDYKITMNKTVTEFYKSGQTTSSTNKESAALKAEFTAMIEAAKSKMHQYKVRAYIQMKSLKACKREIKSVMNTSGNSAPSLFLKSNFEYLRGNYRKAVKLLNSSNIAEHPGPLKTGECVRCMFWNNLGCIHFAMGKHNLGLFYFKKALQENDHTCAQIGDGSNAQASKKFSGIPMCALLANKRYELLYNCGIQLLHIGRPLAAFECLMEAVQVYHSNPRLWLRLAECCITANKGSSEQETKGLPSKKGIVQAVVGQGYHRKIVLASQSTQNTIYSEAQSAAIPVASMEFAAICLRNALLLLPEHQQHDSKPDNGSKSYSQSGGTESGSETSDACSGKTQEGDKFIPAAPSSPLRKQEVENLRCSILACSAYVALALGDNLMALNHAEKLLHQAKLSGSLKFLGHLYAAEALISLDGISDAIAHLNPENVTDVSLGVSSSEQDQGSDKGDLEPVESSGKQTPLCYPSSVSSARATMLFNLGSAYCLRSEYEKARKCLHQAASMVNTKEIPPEAILLGVYLELQNGNTQLALQIIKRNQLLPSVKPGSSPDFRKKPLSFQSTQPVQPIQTPSSFTQVQRK</sequence>
<feature type="chain" id="PRO_0000314584" description="CCR4-NOT transcription complex subunit 10">
    <location>
        <begin position="1"/>
        <end position="624"/>
    </location>
</feature>
<feature type="region of interest" description="Disordered" evidence="2">
    <location>
        <begin position="351"/>
        <end position="397"/>
    </location>
</feature>
<feature type="region of interest" description="Disordered" evidence="2">
    <location>
        <begin position="480"/>
        <end position="507"/>
    </location>
</feature>
<feature type="region of interest" description="Disordered" evidence="2">
    <location>
        <begin position="589"/>
        <end position="624"/>
    </location>
</feature>
<feature type="compositionally biased region" description="Low complexity" evidence="2">
    <location>
        <begin position="363"/>
        <end position="377"/>
    </location>
</feature>
<feature type="compositionally biased region" description="Polar residues" evidence="2">
    <location>
        <begin position="602"/>
        <end position="624"/>
    </location>
</feature>
<feature type="sequence conflict" description="In Ref. 1; AAH90438." evidence="3" ref="1">
    <original>KFI</original>
    <variation>GFT</variation>
    <location>
        <begin position="389"/>
        <end position="391"/>
    </location>
</feature>
<feature type="sequence conflict" description="In Ref. 1; AAH90438." evidence="3" ref="1">
    <original>G</original>
    <variation>R</variation>
    <location>
        <position position="462"/>
    </location>
</feature>
<keyword id="KW-0963">Cytoplasm</keyword>
<keyword id="KW-0539">Nucleus</keyword>
<keyword id="KW-1185">Reference proteome</keyword>
<keyword id="KW-0943">RNA-mediated gene silencing</keyword>
<keyword id="KW-0804">Transcription</keyword>
<keyword id="KW-0805">Transcription regulation</keyword>
<keyword id="KW-0810">Translation regulation</keyword>
<evidence type="ECO:0000250" key="1"/>
<evidence type="ECO:0000256" key="2">
    <source>
        <dbReference type="SAM" id="MobiDB-lite"/>
    </source>
</evidence>
<evidence type="ECO:0000305" key="3"/>
<dbReference type="EMBL" id="BC090438">
    <property type="protein sequence ID" value="AAH90438.1"/>
    <property type="molecule type" value="mRNA"/>
</dbReference>
<dbReference type="EMBL" id="BC124182">
    <property type="protein sequence ID" value="AAI24183.1"/>
    <property type="molecule type" value="mRNA"/>
</dbReference>
<dbReference type="RefSeq" id="NP_001071000.1">
    <property type="nucleotide sequence ID" value="NM_001077532.2"/>
</dbReference>
<dbReference type="SMR" id="Q08CL8"/>
<dbReference type="FunCoup" id="Q08CL8">
    <property type="interactions" value="1388"/>
</dbReference>
<dbReference type="STRING" id="7955.ENSDARP00000075848"/>
<dbReference type="GeneID" id="449918"/>
<dbReference type="KEGG" id="dre:449918"/>
<dbReference type="AGR" id="ZFIN:ZDB-GENE-060929-368"/>
<dbReference type="CTD" id="25904"/>
<dbReference type="ZFIN" id="ZDB-GENE-060929-368">
    <property type="gene designation" value="cnot10"/>
</dbReference>
<dbReference type="eggNOG" id="KOG2471">
    <property type="taxonomic scope" value="Eukaryota"/>
</dbReference>
<dbReference type="InParanoid" id="Q08CL8"/>
<dbReference type="OrthoDB" id="25157at2759"/>
<dbReference type="PhylomeDB" id="Q08CL8"/>
<dbReference type="Reactome" id="R-DRE-6804115">
    <property type="pathway name" value="TP53 regulates transcription of additional cell cycle genes whose exact role in the p53 pathway remain uncertain"/>
</dbReference>
<dbReference type="PRO" id="PR:Q08CL8"/>
<dbReference type="Proteomes" id="UP000000437">
    <property type="component" value="Chromosome 16"/>
</dbReference>
<dbReference type="GO" id="GO:0030014">
    <property type="term" value="C:CCR4-NOT complex"/>
    <property type="evidence" value="ECO:0000250"/>
    <property type="project" value="UniProtKB"/>
</dbReference>
<dbReference type="GO" id="GO:0005737">
    <property type="term" value="C:cytoplasm"/>
    <property type="evidence" value="ECO:0007669"/>
    <property type="project" value="UniProtKB-SubCell"/>
</dbReference>
<dbReference type="GO" id="GO:0005634">
    <property type="term" value="C:nucleus"/>
    <property type="evidence" value="ECO:0007669"/>
    <property type="project" value="UniProtKB-SubCell"/>
</dbReference>
<dbReference type="GO" id="GO:0006402">
    <property type="term" value="P:mRNA catabolic process"/>
    <property type="evidence" value="ECO:0000318"/>
    <property type="project" value="GO_Central"/>
</dbReference>
<dbReference type="GO" id="GO:0017148">
    <property type="term" value="P:negative regulation of translation"/>
    <property type="evidence" value="ECO:0000318"/>
    <property type="project" value="GO_Central"/>
</dbReference>
<dbReference type="GO" id="GO:0031047">
    <property type="term" value="P:regulatory ncRNA-mediated gene silencing"/>
    <property type="evidence" value="ECO:0007669"/>
    <property type="project" value="UniProtKB-KW"/>
</dbReference>
<dbReference type="FunFam" id="1.25.40.10:FF:003649">
    <property type="entry name" value="CCR4-NOT transcription complex subunit 10"/>
    <property type="match status" value="1"/>
</dbReference>
<dbReference type="Gene3D" id="1.25.40.10">
    <property type="entry name" value="Tetratricopeptide repeat domain"/>
    <property type="match status" value="2"/>
</dbReference>
<dbReference type="InterPro" id="IPR039740">
    <property type="entry name" value="CNOT10"/>
</dbReference>
<dbReference type="InterPro" id="IPR011990">
    <property type="entry name" value="TPR-like_helical_dom_sf"/>
</dbReference>
<dbReference type="InterPro" id="IPR019734">
    <property type="entry name" value="TPR_rpt"/>
</dbReference>
<dbReference type="PANTHER" id="PTHR12979">
    <property type="entry name" value="CCR4-NOT TRANSCRIPTION COMPLEX SUBUNIT 10"/>
    <property type="match status" value="1"/>
</dbReference>
<dbReference type="PANTHER" id="PTHR12979:SF5">
    <property type="entry name" value="CCR4-NOT TRANSCRIPTION COMPLEX SUBUNIT 10"/>
    <property type="match status" value="1"/>
</dbReference>
<dbReference type="SMART" id="SM00028">
    <property type="entry name" value="TPR"/>
    <property type="match status" value="4"/>
</dbReference>
<dbReference type="SUPFAM" id="SSF48452">
    <property type="entry name" value="TPR-like"/>
    <property type="match status" value="2"/>
</dbReference>
<accession>Q08CL8</accession>
<accession>Q5BLH2</accession>
<protein>
    <recommendedName>
        <fullName>CCR4-NOT transcription complex subunit 10</fullName>
    </recommendedName>
</protein>
<reference key="1">
    <citation type="submission" date="2005-09" db="EMBL/GenBank/DDBJ databases">
        <authorList>
            <consortium name="NIH - Zebrafish Gene Collection (ZGC) project"/>
        </authorList>
    </citation>
    <scope>NUCLEOTIDE SEQUENCE [LARGE SCALE MRNA]</scope>
    <source>
        <tissue>Embryo</tissue>
    </source>
</reference>
<proteinExistence type="evidence at transcript level"/>
<gene>
    <name type="primary">cnot10</name>
    <name type="ORF">im:7139356</name>
    <name type="ORF">zgc:152939</name>
</gene>